<feature type="signal peptide" evidence="4">
    <location>
        <begin position="1"/>
        <end position="27"/>
    </location>
</feature>
<feature type="chain" id="PRO_0000011992" description="Xylanase inhibitor protein 2">
    <location>
        <begin position="28"/>
        <end position="290"/>
    </location>
</feature>
<feature type="domain" description="GH18" evidence="3">
    <location>
        <begin position="30"/>
        <end position="290"/>
    </location>
</feature>
<feature type="glycosylation site" description="N-linked (GlcNAc...) asparagine" evidence="2">
    <location>
        <position position="112"/>
    </location>
</feature>
<feature type="glycosylation site" description="N-linked (GlcNAc...) asparagine" evidence="2">
    <location>
        <position position="285"/>
    </location>
</feature>
<feature type="disulfide bond" evidence="1">
    <location>
        <begin position="49"/>
        <end position="89"/>
    </location>
</feature>
<feature type="disulfide bond" evidence="1">
    <location>
        <begin position="187"/>
        <end position="216"/>
    </location>
</feature>
<feature type="sequence conflict" description="In Ref. 6; BAA77780." evidence="7" ref="6">
    <original>DGI</original>
    <variation>ELQ</variation>
    <location>
        <begin position="145"/>
        <end position="147"/>
    </location>
</feature>
<dbReference type="EMBL" id="AC134045">
    <property type="protein sequence ID" value="AAX95330.1"/>
    <property type="molecule type" value="Genomic_DNA"/>
</dbReference>
<dbReference type="EMBL" id="DP000010">
    <property type="protein sequence ID" value="ABA95475.1"/>
    <property type="molecule type" value="Genomic_DNA"/>
</dbReference>
<dbReference type="EMBL" id="AP008217">
    <property type="protein sequence ID" value="BAF28883.1"/>
    <property type="molecule type" value="Genomic_DNA"/>
</dbReference>
<dbReference type="EMBL" id="AP014967">
    <property type="protein sequence ID" value="BAT15365.1"/>
    <property type="molecule type" value="Genomic_DNA"/>
</dbReference>
<dbReference type="EMBL" id="AK064356">
    <property type="protein sequence ID" value="BAG89082.1"/>
    <property type="molecule type" value="mRNA"/>
</dbReference>
<dbReference type="EMBL" id="AB027427">
    <property type="protein sequence ID" value="BAA77780.1"/>
    <property type="molecule type" value="mRNA"/>
</dbReference>
<dbReference type="RefSeq" id="XP_015617733.1">
    <property type="nucleotide sequence ID" value="XM_015762247.1"/>
</dbReference>
<dbReference type="SMR" id="Q53NL5"/>
<dbReference type="FunCoup" id="Q53NL5">
    <property type="interactions" value="131"/>
</dbReference>
<dbReference type="STRING" id="39947.Q53NL5"/>
<dbReference type="CAZy" id="GH18">
    <property type="family name" value="Glycoside Hydrolase Family 18"/>
</dbReference>
<dbReference type="GlyCosmos" id="Q53NL5">
    <property type="glycosylation" value="2 sites, No reported glycans"/>
</dbReference>
<dbReference type="PaxDb" id="39947-Q53NL5"/>
<dbReference type="EnsemblPlants" id="Os11t0701100-01">
    <property type="protein sequence ID" value="Os11t0701100-01"/>
    <property type="gene ID" value="Os11g0701100"/>
</dbReference>
<dbReference type="Gramene" id="Os11t0701100-01">
    <property type="protein sequence ID" value="Os11t0701100-01"/>
    <property type="gene ID" value="Os11g0701100"/>
</dbReference>
<dbReference type="KEGG" id="dosa:Os11g0701100"/>
<dbReference type="eggNOG" id="KOG4701">
    <property type="taxonomic scope" value="Eukaryota"/>
</dbReference>
<dbReference type="InParanoid" id="Q53NL5"/>
<dbReference type="OMA" id="CTMSPRY"/>
<dbReference type="OrthoDB" id="6020543at2759"/>
<dbReference type="Proteomes" id="UP000000763">
    <property type="component" value="Chromosome 11"/>
</dbReference>
<dbReference type="Proteomes" id="UP000059680">
    <property type="component" value="Chromosome 11"/>
</dbReference>
<dbReference type="ExpressionAtlas" id="Q53NL5">
    <property type="expression patterns" value="baseline and differential"/>
</dbReference>
<dbReference type="GO" id="GO:0005576">
    <property type="term" value="C:extracellular region"/>
    <property type="evidence" value="ECO:0000318"/>
    <property type="project" value="GO_Central"/>
</dbReference>
<dbReference type="GO" id="GO:0004857">
    <property type="term" value="F:enzyme inhibitor activity"/>
    <property type="evidence" value="ECO:0000314"/>
    <property type="project" value="UniProtKB"/>
</dbReference>
<dbReference type="GO" id="GO:0005975">
    <property type="term" value="P:carbohydrate metabolic process"/>
    <property type="evidence" value="ECO:0007669"/>
    <property type="project" value="InterPro"/>
</dbReference>
<dbReference type="GO" id="GO:0050832">
    <property type="term" value="P:defense response to fungus"/>
    <property type="evidence" value="ECO:0000314"/>
    <property type="project" value="UniProtKB"/>
</dbReference>
<dbReference type="CDD" id="cd02877">
    <property type="entry name" value="GH18_hevamine_XipI_class_III"/>
    <property type="match status" value="1"/>
</dbReference>
<dbReference type="FunFam" id="3.20.20.80:FF:000044">
    <property type="entry name" value="Chitinase III C10701-rice"/>
    <property type="match status" value="1"/>
</dbReference>
<dbReference type="Gene3D" id="3.20.20.80">
    <property type="entry name" value="Glycosidases"/>
    <property type="match status" value="1"/>
</dbReference>
<dbReference type="InterPro" id="IPR045321">
    <property type="entry name" value="Cts1-like"/>
</dbReference>
<dbReference type="InterPro" id="IPR001223">
    <property type="entry name" value="Glyco_hydro18_cat"/>
</dbReference>
<dbReference type="InterPro" id="IPR017853">
    <property type="entry name" value="Glycoside_hydrolase_SF"/>
</dbReference>
<dbReference type="InterPro" id="IPR050542">
    <property type="entry name" value="Glycosyl_Hydrlase18_Chitinase"/>
</dbReference>
<dbReference type="PANTHER" id="PTHR45708">
    <property type="entry name" value="ENDOCHITINASE"/>
    <property type="match status" value="1"/>
</dbReference>
<dbReference type="PANTHER" id="PTHR45708:SF4">
    <property type="entry name" value="XYLANASE INHIBITOR PROTEIN 1"/>
    <property type="match status" value="1"/>
</dbReference>
<dbReference type="Pfam" id="PF00704">
    <property type="entry name" value="Glyco_hydro_18"/>
    <property type="match status" value="1"/>
</dbReference>
<dbReference type="SUPFAM" id="SSF51445">
    <property type="entry name" value="(Trans)glycosidases"/>
    <property type="match status" value="1"/>
</dbReference>
<dbReference type="PROSITE" id="PS51910">
    <property type="entry name" value="GH18_2"/>
    <property type="match status" value="1"/>
</dbReference>
<sequence>MGLVHALLPFAAAAALLLLAAPPPATADDPGLAVYWGRHKEEGSLREACDTGRYTTVIITFYNAFGHGRYSLDISGHPLAAVGADIKHCQSRGITVLLSIGGQGGAYSLPTNASAADVADNLWNAYLGGHRAGVARPFGDDAAVDGIDFFIDQGGADHYDDLARRLDGYNKYYRGRVGVLLTATTRCSYPDHRLEKALATGVFARIHVRMFGDEQCTMSPRYSWEKWAAAFPGSKVYIGLVASPEQDSAWMFQKDLYYEMLQFVRSLPNYGGLAIYDRYFDKKANYTGEG</sequence>
<protein>
    <recommendedName>
        <fullName evidence="6">Xylanase inhibitor protein 2</fullName>
    </recommendedName>
    <alternativeName>
        <fullName evidence="7">Class III chitinase homolog h</fullName>
    </alternativeName>
</protein>
<evidence type="ECO:0000250" key="1">
    <source>
        <dbReference type="UniProtKB" id="Q8L5C6"/>
    </source>
</evidence>
<evidence type="ECO:0000255" key="2">
    <source>
        <dbReference type="PROSITE-ProRule" id="PRU00498"/>
    </source>
</evidence>
<evidence type="ECO:0000255" key="3">
    <source>
        <dbReference type="PROSITE-ProRule" id="PRU01258"/>
    </source>
</evidence>
<evidence type="ECO:0000269" key="4">
    <source>
    </source>
</evidence>
<evidence type="ECO:0000269" key="5">
    <source>
    </source>
</evidence>
<evidence type="ECO:0000303" key="6">
    <source>
    </source>
</evidence>
<evidence type="ECO:0000305" key="7"/>
<evidence type="ECO:0000312" key="8">
    <source>
        <dbReference type="EMBL" id="ABA95475.1"/>
    </source>
</evidence>
<evidence type="ECO:0000312" key="9">
    <source>
        <dbReference type="EMBL" id="BAT15365.1"/>
    </source>
</evidence>
<organism>
    <name type="scientific">Oryza sativa subsp. japonica</name>
    <name type="common">Rice</name>
    <dbReference type="NCBI Taxonomy" id="39947"/>
    <lineage>
        <taxon>Eukaryota</taxon>
        <taxon>Viridiplantae</taxon>
        <taxon>Streptophyta</taxon>
        <taxon>Embryophyta</taxon>
        <taxon>Tracheophyta</taxon>
        <taxon>Spermatophyta</taxon>
        <taxon>Magnoliopsida</taxon>
        <taxon>Liliopsida</taxon>
        <taxon>Poales</taxon>
        <taxon>Poaceae</taxon>
        <taxon>BOP clade</taxon>
        <taxon>Oryzoideae</taxon>
        <taxon>Oryzeae</taxon>
        <taxon>Oryzinae</taxon>
        <taxon>Oryza</taxon>
        <taxon>Oryza sativa</taxon>
    </lineage>
</organism>
<reference key="1">
    <citation type="journal article" date="2005" name="BMC Biol.">
        <title>The sequence of rice chromosomes 11 and 12, rich in disease resistance genes and recent gene duplications.</title>
        <authorList>
            <consortium name="The rice chromosomes 11 and 12 sequencing consortia"/>
        </authorList>
    </citation>
    <scope>NUCLEOTIDE SEQUENCE [LARGE SCALE GENOMIC DNA]</scope>
    <source>
        <strain>cv. Nipponbare</strain>
    </source>
</reference>
<reference key="2">
    <citation type="journal article" date="2005" name="Nature">
        <title>The map-based sequence of the rice genome.</title>
        <authorList>
            <consortium name="International rice genome sequencing project (IRGSP)"/>
        </authorList>
    </citation>
    <scope>NUCLEOTIDE SEQUENCE [LARGE SCALE GENOMIC DNA]</scope>
    <source>
        <strain>cv. Nipponbare</strain>
    </source>
</reference>
<reference key="3">
    <citation type="journal article" date="2008" name="Nucleic Acids Res.">
        <title>The rice annotation project database (RAP-DB): 2008 update.</title>
        <authorList>
            <consortium name="The rice annotation project (RAP)"/>
        </authorList>
    </citation>
    <scope>GENOME REANNOTATION</scope>
    <source>
        <strain>cv. Nipponbare</strain>
    </source>
</reference>
<reference key="4">
    <citation type="journal article" date="2013" name="Rice">
        <title>Improvement of the Oryza sativa Nipponbare reference genome using next generation sequence and optical map data.</title>
        <authorList>
            <person name="Kawahara Y."/>
            <person name="de la Bastide M."/>
            <person name="Hamilton J.P."/>
            <person name="Kanamori H."/>
            <person name="McCombie W.R."/>
            <person name="Ouyang S."/>
            <person name="Schwartz D.C."/>
            <person name="Tanaka T."/>
            <person name="Wu J."/>
            <person name="Zhou S."/>
            <person name="Childs K.L."/>
            <person name="Davidson R.M."/>
            <person name="Lin H."/>
            <person name="Quesada-Ocampo L."/>
            <person name="Vaillancourt B."/>
            <person name="Sakai H."/>
            <person name="Lee S.S."/>
            <person name="Kim J."/>
            <person name="Numa H."/>
            <person name="Itoh T."/>
            <person name="Buell C.R."/>
            <person name="Matsumoto T."/>
        </authorList>
    </citation>
    <scope>GENOME REANNOTATION</scope>
    <source>
        <strain>cv. Nipponbare</strain>
    </source>
</reference>
<reference key="5">
    <citation type="journal article" date="2003" name="Science">
        <title>Collection, mapping, and annotation of over 28,000 cDNA clones from japonica rice.</title>
        <authorList>
            <consortium name="The rice full-length cDNA consortium"/>
        </authorList>
    </citation>
    <scope>NUCLEOTIDE SEQUENCE [LARGE SCALE MRNA]</scope>
    <source>
        <strain>cv. Nipponbare</strain>
    </source>
</reference>
<reference key="6">
    <citation type="journal article" date="1997" name="DNA Res.">
        <title>Rice class III chitinase homologues isolated by random cloning of rice cDNAs.</title>
        <authorList>
            <person name="Nagasaki H."/>
            <person name="Yamamoto K."/>
            <person name="Shomura A."/>
            <person name="Koga-Ban Y."/>
            <person name="Takasuga A."/>
            <person name="Yano M."/>
            <person name="Minobe Y."/>
            <person name="Sasaki T."/>
        </authorList>
    </citation>
    <scope>NUCLEOTIDE SEQUENCE [MRNA] OF 1-147</scope>
    <source>
        <strain>cv. Nipponbare</strain>
        <tissue>Callus</tissue>
    </source>
</reference>
<reference key="7">
    <citation type="journal article" date="2005" name="J. Enzym. Inhib. Med. Chem.">
        <title>Purification and characterization of a XIP-type endoxylanase inhibitor from rice (Oryza sativa).</title>
        <authorList>
            <person name="Goesaert H."/>
            <person name="Gebruers K."/>
            <person name="Courtin C.M."/>
            <person name="Delcour J.A."/>
        </authorList>
    </citation>
    <scope>PROTEIN SEQUENCE OF 28-57</scope>
    <scope>FUNCTION</scope>
</reference>
<reference key="8">
    <citation type="journal article" date="2007" name="Plant Cell Physiol.">
        <title>Induction of a novel XIP-type xylanase inhibitor by external ascorbic acid treatment and differential expression of XIP-family genes in rice.</title>
        <authorList>
            <person name="Tokunaga T."/>
            <person name="Esaka M."/>
        </authorList>
    </citation>
    <scope>INDUCTION</scope>
</reference>
<gene>
    <name evidence="7" type="primary">Chib3H-h</name>
    <name evidence="9" type="ordered locus">Os11g0701100</name>
    <name evidence="8" type="ordered locus">LOC_Os11g47520</name>
</gene>
<comment type="function">
    <text evidence="4">Fungal xylanase inhibitor. Possesses competitive inhibiting activity against several fungal endo-1,4-beta-D-xylanases belonging to glycoside hydrolase family 10 (GH10) and family 11 (GH11). May function in plant defense against secreted fungal pathogen xylanases. Is similar to class III chitinases, but does not exhibit chitinase activity.</text>
</comment>
<comment type="subunit">
    <text>Binds to fungal GH10 xylanases.</text>
</comment>
<comment type="subcellular location">
    <subcellularLocation>
        <location evidence="7">Secreted</location>
    </subcellularLocation>
</comment>
<comment type="induction">
    <text evidence="5">Induced by wounding and methyl jasmonate in roots.</text>
</comment>
<comment type="similarity">
    <text evidence="7">Belongs to the glycosyl hydrolase 18 family. Xylanase inhibitor subfamily.</text>
</comment>
<accession>Q53NL5</accession>
<accession>A0A0P0Y5Q2</accession>
<accession>Q2QZ66</accession>
<accession>Q9SXY5</accession>
<proteinExistence type="evidence at protein level"/>
<name>XIP2_ORYSJ</name>
<keyword id="KW-0903">Direct protein sequencing</keyword>
<keyword id="KW-1015">Disulfide bond</keyword>
<keyword id="KW-0325">Glycoprotein</keyword>
<keyword id="KW-0611">Plant defense</keyword>
<keyword id="KW-1185">Reference proteome</keyword>
<keyword id="KW-0964">Secreted</keyword>
<keyword id="KW-0732">Signal</keyword>